<organism>
    <name type="scientific">Capra hircus</name>
    <name type="common">Goat</name>
    <dbReference type="NCBI Taxonomy" id="9925"/>
    <lineage>
        <taxon>Eukaryota</taxon>
        <taxon>Metazoa</taxon>
        <taxon>Chordata</taxon>
        <taxon>Craniata</taxon>
        <taxon>Vertebrata</taxon>
        <taxon>Euteleostomi</taxon>
        <taxon>Mammalia</taxon>
        <taxon>Eutheria</taxon>
        <taxon>Laurasiatheria</taxon>
        <taxon>Artiodactyla</taxon>
        <taxon>Ruminantia</taxon>
        <taxon>Pecora</taxon>
        <taxon>Bovidae</taxon>
        <taxon>Caprinae</taxon>
        <taxon>Capra</taxon>
    </lineage>
</organism>
<sequence>DTHISEKIIDCNDIG</sequence>
<dbReference type="Proteomes" id="UP000291000">
    <property type="component" value="Unassembled WGS sequence"/>
</dbReference>
<dbReference type="Proteomes" id="UP000694566">
    <property type="component" value="Unplaced"/>
</dbReference>
<dbReference type="GO" id="GO:0004869">
    <property type="term" value="F:cysteine-type endopeptidase inhibitor activity"/>
    <property type="evidence" value="ECO:0000314"/>
    <property type="project" value="UniProtKB"/>
</dbReference>
<dbReference type="GO" id="GO:0050829">
    <property type="term" value="P:defense response to Gram-negative bacterium"/>
    <property type="evidence" value="ECO:0000314"/>
    <property type="project" value="UniProtKB"/>
</dbReference>
<dbReference type="GO" id="GO:0050830">
    <property type="term" value="P:defense response to Gram-positive bacterium"/>
    <property type="evidence" value="ECO:0000314"/>
    <property type="project" value="UniProtKB"/>
</dbReference>
<accession>P84910</accession>
<feature type="chain" id="PRO_0000248505" description="Cystatin-2">
    <location>
        <begin position="1"/>
        <end position="15" status="greater than"/>
    </location>
</feature>
<feature type="unsure residue" description="K or Y">
    <location>
        <position position="7"/>
    </location>
</feature>
<feature type="non-terminal residue" evidence="2">
    <location>
        <position position="15"/>
    </location>
</feature>
<comment type="function">
    <text evidence="1">Inhibits papain, ficin and bromelain with an IC(50) of 0.079 uM, 0.099 uM and 0.125 uM respectively. Has antibacterial activity against Gram-positive bacteria S.aureus and S.hemolyticus, and against the Gram-negative bacterium E.coli. Reduced antibacterial activity against Gram-positive bacterium B.subtilis. No antibacterial activity against the Gram-negative bacterium P.fluorescens.</text>
</comment>
<comment type="PTM">
    <text evidence="1">Glycosylated.</text>
</comment>
<comment type="miscellaneous">
    <text evidence="1">Stable in the pH range 4.0-9.0 at 37 degrees Celsius. Stable when incubated in the temperature range 25-75 degrees Celsius and pH 7.5.</text>
</comment>
<comment type="similarity">
    <text evidence="1">Belongs to the cystatin family.</text>
</comment>
<name>CYT2_CAPHI</name>
<keyword id="KW-0044">Antibiotic</keyword>
<keyword id="KW-0929">Antimicrobial</keyword>
<keyword id="KW-0903">Direct protein sequencing</keyword>
<keyword id="KW-0325">Glycoprotein</keyword>
<keyword id="KW-0646">Protease inhibitor</keyword>
<keyword id="KW-1185">Reference proteome</keyword>
<keyword id="KW-0789">Thiol protease inhibitor</keyword>
<protein>
    <recommendedName>
        <fullName>Cystatin-2</fullName>
    </recommendedName>
    <alternativeName>
        <fullName>Cystatin-II</fullName>
    </alternativeName>
</protein>
<proteinExistence type="evidence at protein level"/>
<reference evidence="3" key="1">
    <citation type="journal article" date="2005" name="Comp. Biochem. Physiol.">
        <title>Isolation, characterization and kinetics of goat cystatins.</title>
        <authorList>
            <person name="Sadaf Z."/>
            <person name="Shahid P.B."/>
            <person name="Bilqees B."/>
        </authorList>
    </citation>
    <scope>PROTEIN SEQUENCE</scope>
    <scope>FUNCTION</scope>
    <scope>GLYCOSYLATION</scope>
    <source>
        <tissue evidence="1">Kidney</tissue>
    </source>
</reference>
<evidence type="ECO:0000269" key="1">
    <source>
    </source>
</evidence>
<evidence type="ECO:0000303" key="2">
    <source>
    </source>
</evidence>
<evidence type="ECO:0000305" key="3"/>